<sequence length="102" mass="11134">MIVPFEHVLILAGILFALGLVCVLVWRMNLIMLLIGIEVMLNAAMLAFVGGAARWGMADGQVFSLVIMALTSAEVSLALAMVVYLHRRKRTVDADEFSELKG</sequence>
<keyword id="KW-0997">Cell inner membrane</keyword>
<keyword id="KW-1003">Cell membrane</keyword>
<keyword id="KW-0472">Membrane</keyword>
<keyword id="KW-0520">NAD</keyword>
<keyword id="KW-0874">Quinone</keyword>
<keyword id="KW-1185">Reference proteome</keyword>
<keyword id="KW-1278">Translocase</keyword>
<keyword id="KW-0812">Transmembrane</keyword>
<keyword id="KW-1133">Transmembrane helix</keyword>
<keyword id="KW-0813">Transport</keyword>
<keyword id="KW-0830">Ubiquinone</keyword>
<proteinExistence type="inferred from homology"/>
<feature type="chain" id="PRO_0000390078" description="NADH-quinone oxidoreductase subunit K 1">
    <location>
        <begin position="1"/>
        <end position="102"/>
    </location>
</feature>
<feature type="transmembrane region" description="Helical" evidence="1">
    <location>
        <begin position="5"/>
        <end position="25"/>
    </location>
</feature>
<feature type="transmembrane region" description="Helical" evidence="1">
    <location>
        <begin position="30"/>
        <end position="50"/>
    </location>
</feature>
<feature type="transmembrane region" description="Helical" evidence="1">
    <location>
        <begin position="65"/>
        <end position="85"/>
    </location>
</feature>
<comment type="function">
    <text evidence="1">NDH-1 shuttles electrons from NADH, via FMN and iron-sulfur (Fe-S) centers, to quinones in the respiratory chain. The immediate electron acceptor for the enzyme in this species is believed to be ubiquinone. Couples the redox reaction to proton translocation (for every two electrons transferred, four hydrogen ions are translocated across the cytoplasmic membrane), and thus conserves the redox energy in a proton gradient.</text>
</comment>
<comment type="catalytic activity">
    <reaction evidence="1">
        <text>a quinone + NADH + 5 H(+)(in) = a quinol + NAD(+) + 4 H(+)(out)</text>
        <dbReference type="Rhea" id="RHEA:57888"/>
        <dbReference type="ChEBI" id="CHEBI:15378"/>
        <dbReference type="ChEBI" id="CHEBI:24646"/>
        <dbReference type="ChEBI" id="CHEBI:57540"/>
        <dbReference type="ChEBI" id="CHEBI:57945"/>
        <dbReference type="ChEBI" id="CHEBI:132124"/>
    </reaction>
</comment>
<comment type="subunit">
    <text evidence="1">NDH-1 is composed of 14 different subunits. Subunits NuoA, H, J, K, L, M, N constitute the membrane sector of the complex.</text>
</comment>
<comment type="subcellular location">
    <subcellularLocation>
        <location evidence="1">Cell inner membrane</location>
        <topology evidence="1">Multi-pass membrane protein</topology>
    </subcellularLocation>
</comment>
<comment type="similarity">
    <text evidence="1">Belongs to the complex I subunit 4L family.</text>
</comment>
<accession>Q39ZB0</accession>
<evidence type="ECO:0000255" key="1">
    <source>
        <dbReference type="HAMAP-Rule" id="MF_01456"/>
    </source>
</evidence>
<reference key="1">
    <citation type="journal article" date="2009" name="BMC Microbiol.">
        <title>The genome sequence of Geobacter metallireducens: features of metabolism, physiology and regulation common and dissimilar to Geobacter sulfurreducens.</title>
        <authorList>
            <person name="Aklujkar M."/>
            <person name="Krushkal J."/>
            <person name="DiBartolo G."/>
            <person name="Lapidus A."/>
            <person name="Land M.L."/>
            <person name="Lovley D.R."/>
        </authorList>
    </citation>
    <scope>NUCLEOTIDE SEQUENCE [LARGE SCALE GENOMIC DNA]</scope>
    <source>
        <strain>ATCC 53774 / DSM 7210 / GS-15</strain>
    </source>
</reference>
<organism>
    <name type="scientific">Geobacter metallireducens (strain ATCC 53774 / DSM 7210 / GS-15)</name>
    <dbReference type="NCBI Taxonomy" id="269799"/>
    <lineage>
        <taxon>Bacteria</taxon>
        <taxon>Pseudomonadati</taxon>
        <taxon>Thermodesulfobacteriota</taxon>
        <taxon>Desulfuromonadia</taxon>
        <taxon>Geobacterales</taxon>
        <taxon>Geobacteraceae</taxon>
        <taxon>Geobacter</taxon>
    </lineage>
</organism>
<protein>
    <recommendedName>
        <fullName evidence="1">NADH-quinone oxidoreductase subunit K 1</fullName>
        <ecNumber evidence="1">7.1.1.-</ecNumber>
    </recommendedName>
    <alternativeName>
        <fullName evidence="1">NADH dehydrogenase I subunit K 1</fullName>
    </alternativeName>
    <alternativeName>
        <fullName evidence="1">NDH-1 subunit K 1</fullName>
    </alternativeName>
</protein>
<gene>
    <name evidence="1" type="primary">nuoK1</name>
    <name type="ordered locus">Gmet_0167</name>
</gene>
<dbReference type="EC" id="7.1.1.-" evidence="1"/>
<dbReference type="EMBL" id="CP000148">
    <property type="protein sequence ID" value="ABB30414.1"/>
    <property type="molecule type" value="Genomic_DNA"/>
</dbReference>
<dbReference type="SMR" id="Q39ZB0"/>
<dbReference type="STRING" id="269799.Gmet_0167"/>
<dbReference type="KEGG" id="gme:Gmet_0167"/>
<dbReference type="eggNOG" id="COG0713">
    <property type="taxonomic scope" value="Bacteria"/>
</dbReference>
<dbReference type="HOGENOM" id="CLU_144724_0_1_7"/>
<dbReference type="Proteomes" id="UP000007073">
    <property type="component" value="Chromosome"/>
</dbReference>
<dbReference type="GO" id="GO:0030964">
    <property type="term" value="C:NADH dehydrogenase complex"/>
    <property type="evidence" value="ECO:0007669"/>
    <property type="project" value="TreeGrafter"/>
</dbReference>
<dbReference type="GO" id="GO:0005886">
    <property type="term" value="C:plasma membrane"/>
    <property type="evidence" value="ECO:0007669"/>
    <property type="project" value="UniProtKB-SubCell"/>
</dbReference>
<dbReference type="GO" id="GO:0050136">
    <property type="term" value="F:NADH:ubiquinone reductase (non-electrogenic) activity"/>
    <property type="evidence" value="ECO:0007669"/>
    <property type="project" value="UniProtKB-UniRule"/>
</dbReference>
<dbReference type="GO" id="GO:0048038">
    <property type="term" value="F:quinone binding"/>
    <property type="evidence" value="ECO:0007669"/>
    <property type="project" value="UniProtKB-KW"/>
</dbReference>
<dbReference type="GO" id="GO:0042773">
    <property type="term" value="P:ATP synthesis coupled electron transport"/>
    <property type="evidence" value="ECO:0007669"/>
    <property type="project" value="InterPro"/>
</dbReference>
<dbReference type="FunFam" id="1.10.287.3510:FF:000001">
    <property type="entry name" value="NADH-quinone oxidoreductase subunit K"/>
    <property type="match status" value="1"/>
</dbReference>
<dbReference type="Gene3D" id="1.10.287.3510">
    <property type="match status" value="1"/>
</dbReference>
<dbReference type="HAMAP" id="MF_01456">
    <property type="entry name" value="NDH1_NuoK"/>
    <property type="match status" value="1"/>
</dbReference>
<dbReference type="InterPro" id="IPR001133">
    <property type="entry name" value="NADH_UbQ_OxRdtase_chain4L/K"/>
</dbReference>
<dbReference type="InterPro" id="IPR039428">
    <property type="entry name" value="NUOK/Mnh_C1-like"/>
</dbReference>
<dbReference type="NCBIfam" id="NF004319">
    <property type="entry name" value="PRK05715.1-1"/>
    <property type="match status" value="1"/>
</dbReference>
<dbReference type="NCBIfam" id="NF004320">
    <property type="entry name" value="PRK05715.1-2"/>
    <property type="match status" value="1"/>
</dbReference>
<dbReference type="PANTHER" id="PTHR11434:SF16">
    <property type="entry name" value="NADH-UBIQUINONE OXIDOREDUCTASE CHAIN 4L"/>
    <property type="match status" value="1"/>
</dbReference>
<dbReference type="PANTHER" id="PTHR11434">
    <property type="entry name" value="NADH-UBIQUINONE OXIDOREDUCTASE SUBUNIT ND4L"/>
    <property type="match status" value="1"/>
</dbReference>
<dbReference type="Pfam" id="PF00420">
    <property type="entry name" value="Oxidored_q2"/>
    <property type="match status" value="1"/>
</dbReference>
<name>NUOK1_GEOMG</name>